<feature type="chain" id="PRO_0000190994" description="GTPase IMAP family member 3">
    <location>
        <begin position="1"/>
        <end position="301"/>
    </location>
</feature>
<feature type="topological domain" description="Cytoplasmic" evidence="3">
    <location>
        <begin position="1"/>
        <end position="279"/>
    </location>
</feature>
<feature type="transmembrane region" description="Helical; Anchor for type IV membrane protein" evidence="3">
    <location>
        <begin position="280"/>
        <end position="300"/>
    </location>
</feature>
<feature type="topological domain" description="Lumenal" evidence="3">
    <location>
        <position position="301"/>
    </location>
</feature>
<feature type="domain" description="AIG1-type G" evidence="4">
    <location>
        <begin position="20"/>
        <end position="223"/>
    </location>
</feature>
<feature type="region of interest" description="Required for targeting to the endoplasmic reticulum" evidence="7">
    <location>
        <begin position="263"/>
        <end position="301"/>
    </location>
</feature>
<feature type="binding site" evidence="1">
    <location>
        <begin position="29"/>
        <end position="37"/>
    </location>
    <ligand>
        <name>GTP</name>
        <dbReference type="ChEBI" id="CHEBI:37565"/>
    </ligand>
</feature>
<feature type="binding site" evidence="2">
    <location>
        <position position="50"/>
    </location>
    <ligand>
        <name>GTP</name>
        <dbReference type="ChEBI" id="CHEBI:37565"/>
    </ligand>
</feature>
<feature type="binding site" evidence="1">
    <location>
        <begin position="147"/>
        <end position="149"/>
    </location>
    <ligand>
        <name>GTP</name>
        <dbReference type="ChEBI" id="CHEBI:37565"/>
    </ligand>
</feature>
<feature type="binding site" evidence="1">
    <location>
        <position position="184"/>
    </location>
    <ligand>
        <name>GTP</name>
        <dbReference type="ChEBI" id="CHEBI:37565"/>
    </ligand>
</feature>
<feature type="sequence conflict" description="In Ref. 3; AAH94914." evidence="10" ref="3">
    <original>Y</original>
    <variation>C</variation>
    <location>
        <position position="99"/>
    </location>
</feature>
<feature type="sequence conflict" description="In Ref. 3; AAH94914." evidence="10" ref="3">
    <original>C</original>
    <variation>R</variation>
    <location>
        <position position="209"/>
    </location>
</feature>
<feature type="sequence conflict" description="In Ref. 4; BAC25217." evidence="10" ref="4">
    <original>E</original>
    <variation>G</variation>
    <location>
        <position position="257"/>
    </location>
</feature>
<organism>
    <name type="scientific">Mus musculus</name>
    <name type="common">Mouse</name>
    <dbReference type="NCBI Taxonomy" id="10090"/>
    <lineage>
        <taxon>Eukaryota</taxon>
        <taxon>Metazoa</taxon>
        <taxon>Chordata</taxon>
        <taxon>Craniata</taxon>
        <taxon>Vertebrata</taxon>
        <taxon>Euteleostomi</taxon>
        <taxon>Mammalia</taxon>
        <taxon>Eutheria</taxon>
        <taxon>Euarchontoglires</taxon>
        <taxon>Glires</taxon>
        <taxon>Rodentia</taxon>
        <taxon>Myomorpha</taxon>
        <taxon>Muroidea</taxon>
        <taxon>Muridae</taxon>
        <taxon>Murinae</taxon>
        <taxon>Mus</taxon>
        <taxon>Mus</taxon>
    </lineage>
</organism>
<name>GIMA3_MOUSE</name>
<dbReference type="EMBL" id="AF337052">
    <property type="protein sequence ID" value="AAK31138.1"/>
    <property type="status" value="ALT_FRAME"/>
    <property type="molecule type" value="mRNA"/>
</dbReference>
<dbReference type="EMBL" id="AB164418">
    <property type="protein sequence ID" value="BAD14959.1"/>
    <property type="molecule type" value="mRNA"/>
</dbReference>
<dbReference type="EMBL" id="BC094914">
    <property type="protein sequence ID" value="AAH94914.1"/>
    <property type="molecule type" value="mRNA"/>
</dbReference>
<dbReference type="EMBL" id="AK008376">
    <property type="protein sequence ID" value="BAC25217.1"/>
    <property type="molecule type" value="mRNA"/>
</dbReference>
<dbReference type="CCDS" id="CCDS20115.1"/>
<dbReference type="RefSeq" id="NP_112537.2">
    <property type="nucleotide sequence ID" value="NM_031247.3"/>
</dbReference>
<dbReference type="SMR" id="Q99MI6"/>
<dbReference type="BioGRID" id="219916">
    <property type="interactions" value="3"/>
</dbReference>
<dbReference type="DIP" id="DIP-29182N"/>
<dbReference type="FunCoup" id="Q99MI6">
    <property type="interactions" value="234"/>
</dbReference>
<dbReference type="IntAct" id="Q99MI6">
    <property type="interactions" value="6"/>
</dbReference>
<dbReference type="STRING" id="10090.ENSMUSP00000145211"/>
<dbReference type="PaxDb" id="10090-ENSMUSP00000047435"/>
<dbReference type="ProteomicsDB" id="267794"/>
<dbReference type="DNASU" id="83408"/>
<dbReference type="Ensembl" id="ENSMUST00000038811.10">
    <property type="protein sequence ID" value="ENSMUSP00000047435.9"/>
    <property type="gene ID" value="ENSMUSG00000039264.10"/>
</dbReference>
<dbReference type="Ensembl" id="ENSMUST00000204036.2">
    <property type="protein sequence ID" value="ENSMUSP00000145211.2"/>
    <property type="gene ID" value="ENSMUSG00000039264.10"/>
</dbReference>
<dbReference type="GeneID" id="83408"/>
<dbReference type="KEGG" id="mmu:83408"/>
<dbReference type="UCSC" id="uc009bvt.1">
    <property type="organism name" value="mouse"/>
</dbReference>
<dbReference type="AGR" id="MGI:1932723"/>
<dbReference type="CTD" id="83408"/>
<dbReference type="MGI" id="MGI:1932723">
    <property type="gene designation" value="Gimap3"/>
</dbReference>
<dbReference type="VEuPathDB" id="HostDB:ENSMUSG00000039264"/>
<dbReference type="eggNOG" id="ENOG502RB0C">
    <property type="taxonomic scope" value="Eukaryota"/>
</dbReference>
<dbReference type="GeneTree" id="ENSGT00940000154844"/>
<dbReference type="HOGENOM" id="CLU_010468_1_1_1"/>
<dbReference type="InParanoid" id="Q99MI6"/>
<dbReference type="OMA" id="LHKEICA"/>
<dbReference type="OrthoDB" id="8954335at2759"/>
<dbReference type="PhylomeDB" id="Q99MI6"/>
<dbReference type="TreeFam" id="TF330845"/>
<dbReference type="BioGRID-ORCS" id="83408">
    <property type="hits" value="3 hits in 77 CRISPR screens"/>
</dbReference>
<dbReference type="ChiTaRS" id="Gimap3">
    <property type="organism name" value="mouse"/>
</dbReference>
<dbReference type="PRO" id="PR:Q99MI6"/>
<dbReference type="Proteomes" id="UP000000589">
    <property type="component" value="Chromosome 6"/>
</dbReference>
<dbReference type="RNAct" id="Q99MI6">
    <property type="molecule type" value="protein"/>
</dbReference>
<dbReference type="Bgee" id="ENSMUSG00000039264">
    <property type="expression patterns" value="Expressed in lymph node and 44 other cell types or tissues"/>
</dbReference>
<dbReference type="GO" id="GO:0005789">
    <property type="term" value="C:endoplasmic reticulum membrane"/>
    <property type="evidence" value="ECO:0007669"/>
    <property type="project" value="UniProtKB-SubCell"/>
</dbReference>
<dbReference type="GO" id="GO:0005741">
    <property type="term" value="C:mitochondrial outer membrane"/>
    <property type="evidence" value="ECO:0000314"/>
    <property type="project" value="MGI"/>
</dbReference>
<dbReference type="GO" id="GO:0005739">
    <property type="term" value="C:mitochondrion"/>
    <property type="evidence" value="ECO:0007005"/>
    <property type="project" value="MGI"/>
</dbReference>
<dbReference type="GO" id="GO:0005525">
    <property type="term" value="F:GTP binding"/>
    <property type="evidence" value="ECO:0000314"/>
    <property type="project" value="MGI"/>
</dbReference>
<dbReference type="GO" id="GO:0000002">
    <property type="term" value="P:mitochondrial genome maintenance"/>
    <property type="evidence" value="ECO:0000315"/>
    <property type="project" value="MGI"/>
</dbReference>
<dbReference type="CDD" id="cd01852">
    <property type="entry name" value="AIG1"/>
    <property type="match status" value="1"/>
</dbReference>
<dbReference type="FunFam" id="3.40.50.300:FF:000366">
    <property type="entry name" value="GTPase, IMAP family member 2"/>
    <property type="match status" value="1"/>
</dbReference>
<dbReference type="Gene3D" id="3.40.50.300">
    <property type="entry name" value="P-loop containing nucleotide triphosphate hydrolases"/>
    <property type="match status" value="1"/>
</dbReference>
<dbReference type="InterPro" id="IPR006703">
    <property type="entry name" value="G_AIG1"/>
</dbReference>
<dbReference type="InterPro" id="IPR045058">
    <property type="entry name" value="GIMA/IAN/Toc"/>
</dbReference>
<dbReference type="InterPro" id="IPR027417">
    <property type="entry name" value="P-loop_NTPase"/>
</dbReference>
<dbReference type="PANTHER" id="PTHR10903:SF69">
    <property type="entry name" value="GTPASE IMAP FAMILY MEMBER 5"/>
    <property type="match status" value="1"/>
</dbReference>
<dbReference type="PANTHER" id="PTHR10903">
    <property type="entry name" value="GTPASE, IMAP FAMILY MEMBER-RELATED"/>
    <property type="match status" value="1"/>
</dbReference>
<dbReference type="Pfam" id="PF04548">
    <property type="entry name" value="AIG1"/>
    <property type="match status" value="1"/>
</dbReference>
<dbReference type="SUPFAM" id="SSF52540">
    <property type="entry name" value="P-loop containing nucleoside triphosphate hydrolases"/>
    <property type="match status" value="1"/>
</dbReference>
<dbReference type="PROSITE" id="PS51720">
    <property type="entry name" value="G_AIG1"/>
    <property type="match status" value="1"/>
</dbReference>
<sequence>METLQNVVTGGKKGGCTSGSRPLRILLVGKSGCGKSATGNSLLRRPAFESRLRGQSVTRTSQAETGTWEGRSILVVDTPPIFESKAQNQDMDKDIGDCYLLCAPGPHVLLLVTQLGRFTAEDVMAVRMVKEVFGVGVMRHMIVLFTRKEDLAEKSLEEFVTHTDNRSLRSLVQECGRRYCAFNNRASGEEQQGQLAELMALVRRLEQECEGSFHSNDLFLHAETLLREGYSVHQEAYRCYLAKVRQEVEKQRWELEEQEGSWVLKVLPIGKKLEVLHSDFCWYLVLAILIFFVFFFLLFYV</sequence>
<keyword id="KW-0256">Endoplasmic reticulum</keyword>
<keyword id="KW-0342">GTP-binding</keyword>
<keyword id="KW-0472">Membrane</keyword>
<keyword id="KW-0547">Nucleotide-binding</keyword>
<keyword id="KW-1185">Reference proteome</keyword>
<keyword id="KW-0812">Transmembrane</keyword>
<keyword id="KW-1133">Transmembrane helix</keyword>
<reference key="1">
    <citation type="journal article" date="2001" name="Nucleic Acids Res.">
        <title>Molecular cloning of Ian4: a BCR/ABL-induced gene that encodes an outer membrane mitochondrial protein with GTP-binding activity.</title>
        <authorList>
            <person name="Daheron L."/>
            <person name="Zenz T."/>
            <person name="Siracusa L.D."/>
            <person name="Brenner C."/>
            <person name="Calabretta B."/>
        </authorList>
    </citation>
    <scope>NUCLEOTIDE SEQUENCE [MRNA]</scope>
    <scope>FUNCTION</scope>
    <scope>SUBCELLULAR LOCATION</scope>
</reference>
<reference key="2">
    <citation type="journal article" date="2006" name="PLoS Biol.">
        <title>IAN family critically regulates survival and development of T lymphocytes.</title>
        <authorList>
            <person name="Nitta T."/>
            <person name="Nasreen M."/>
            <person name="Seike T."/>
            <person name="Goji A."/>
            <person name="Ohigashi I."/>
            <person name="Miyazaki T."/>
            <person name="Ohta T."/>
            <person name="Kanno M."/>
            <person name="Takahama Y."/>
        </authorList>
    </citation>
    <scope>NUCLEOTIDE SEQUENCE [MRNA]</scope>
    <scope>FUNCTION</scope>
    <scope>INTERACTION WITH BAD; BAK1; BAX; BCL2; BCL2L1 AND BCL2L11</scope>
    <scope>DEVELOPMENTAL STAGE</scope>
    <scope>TISSUE SPECIFICITY</scope>
    <source>
        <strain>C57BL/6J</strain>
    </source>
</reference>
<reference key="3">
    <citation type="journal article" date="2004" name="Genome Res.">
        <title>The status, quality, and expansion of the NIH full-length cDNA project: the Mammalian Gene Collection (MGC).</title>
        <authorList>
            <consortium name="The MGC Project Team"/>
        </authorList>
    </citation>
    <scope>NUCLEOTIDE SEQUENCE [LARGE SCALE MRNA]</scope>
    <source>
        <strain>C57BL/6NCr</strain>
        <tissue>Hematopoietic stem cell</tissue>
    </source>
</reference>
<reference key="4">
    <citation type="journal article" date="2005" name="Science">
        <title>The transcriptional landscape of the mammalian genome.</title>
        <authorList>
            <person name="Carninci P."/>
            <person name="Kasukawa T."/>
            <person name="Katayama S."/>
            <person name="Gough J."/>
            <person name="Frith M.C."/>
            <person name="Maeda N."/>
            <person name="Oyama R."/>
            <person name="Ravasi T."/>
            <person name="Lenhard B."/>
            <person name="Wells C."/>
            <person name="Kodzius R."/>
            <person name="Shimokawa K."/>
            <person name="Bajic V.B."/>
            <person name="Brenner S.E."/>
            <person name="Batalov S."/>
            <person name="Forrest A.R."/>
            <person name="Zavolan M."/>
            <person name="Davis M.J."/>
            <person name="Wilming L.G."/>
            <person name="Aidinis V."/>
            <person name="Allen J.E."/>
            <person name="Ambesi-Impiombato A."/>
            <person name="Apweiler R."/>
            <person name="Aturaliya R.N."/>
            <person name="Bailey T.L."/>
            <person name="Bansal M."/>
            <person name="Baxter L."/>
            <person name="Beisel K.W."/>
            <person name="Bersano T."/>
            <person name="Bono H."/>
            <person name="Chalk A.M."/>
            <person name="Chiu K.P."/>
            <person name="Choudhary V."/>
            <person name="Christoffels A."/>
            <person name="Clutterbuck D.R."/>
            <person name="Crowe M.L."/>
            <person name="Dalla E."/>
            <person name="Dalrymple B.P."/>
            <person name="de Bono B."/>
            <person name="Della Gatta G."/>
            <person name="di Bernardo D."/>
            <person name="Down T."/>
            <person name="Engstrom P."/>
            <person name="Fagiolini M."/>
            <person name="Faulkner G."/>
            <person name="Fletcher C.F."/>
            <person name="Fukushima T."/>
            <person name="Furuno M."/>
            <person name="Futaki S."/>
            <person name="Gariboldi M."/>
            <person name="Georgii-Hemming P."/>
            <person name="Gingeras T.R."/>
            <person name="Gojobori T."/>
            <person name="Green R.E."/>
            <person name="Gustincich S."/>
            <person name="Harbers M."/>
            <person name="Hayashi Y."/>
            <person name="Hensch T.K."/>
            <person name="Hirokawa N."/>
            <person name="Hill D."/>
            <person name="Huminiecki L."/>
            <person name="Iacono M."/>
            <person name="Ikeo K."/>
            <person name="Iwama A."/>
            <person name="Ishikawa T."/>
            <person name="Jakt M."/>
            <person name="Kanapin A."/>
            <person name="Katoh M."/>
            <person name="Kawasawa Y."/>
            <person name="Kelso J."/>
            <person name="Kitamura H."/>
            <person name="Kitano H."/>
            <person name="Kollias G."/>
            <person name="Krishnan S.P."/>
            <person name="Kruger A."/>
            <person name="Kummerfeld S.K."/>
            <person name="Kurochkin I.V."/>
            <person name="Lareau L.F."/>
            <person name="Lazarevic D."/>
            <person name="Lipovich L."/>
            <person name="Liu J."/>
            <person name="Liuni S."/>
            <person name="McWilliam S."/>
            <person name="Madan Babu M."/>
            <person name="Madera M."/>
            <person name="Marchionni L."/>
            <person name="Matsuda H."/>
            <person name="Matsuzawa S."/>
            <person name="Miki H."/>
            <person name="Mignone F."/>
            <person name="Miyake S."/>
            <person name="Morris K."/>
            <person name="Mottagui-Tabar S."/>
            <person name="Mulder N."/>
            <person name="Nakano N."/>
            <person name="Nakauchi H."/>
            <person name="Ng P."/>
            <person name="Nilsson R."/>
            <person name="Nishiguchi S."/>
            <person name="Nishikawa S."/>
            <person name="Nori F."/>
            <person name="Ohara O."/>
            <person name="Okazaki Y."/>
            <person name="Orlando V."/>
            <person name="Pang K.C."/>
            <person name="Pavan W.J."/>
            <person name="Pavesi G."/>
            <person name="Pesole G."/>
            <person name="Petrovsky N."/>
            <person name="Piazza S."/>
            <person name="Reed J."/>
            <person name="Reid J.F."/>
            <person name="Ring B.Z."/>
            <person name="Ringwald M."/>
            <person name="Rost B."/>
            <person name="Ruan Y."/>
            <person name="Salzberg S.L."/>
            <person name="Sandelin A."/>
            <person name="Schneider C."/>
            <person name="Schoenbach C."/>
            <person name="Sekiguchi K."/>
            <person name="Semple C.A."/>
            <person name="Seno S."/>
            <person name="Sessa L."/>
            <person name="Sheng Y."/>
            <person name="Shibata Y."/>
            <person name="Shimada H."/>
            <person name="Shimada K."/>
            <person name="Silva D."/>
            <person name="Sinclair B."/>
            <person name="Sperling S."/>
            <person name="Stupka E."/>
            <person name="Sugiura K."/>
            <person name="Sultana R."/>
            <person name="Takenaka Y."/>
            <person name="Taki K."/>
            <person name="Tammoja K."/>
            <person name="Tan S.L."/>
            <person name="Tang S."/>
            <person name="Taylor M.S."/>
            <person name="Tegner J."/>
            <person name="Teichmann S.A."/>
            <person name="Ueda H.R."/>
            <person name="van Nimwegen E."/>
            <person name="Verardo R."/>
            <person name="Wei C.L."/>
            <person name="Yagi K."/>
            <person name="Yamanishi H."/>
            <person name="Zabarovsky E."/>
            <person name="Zhu S."/>
            <person name="Zimmer A."/>
            <person name="Hide W."/>
            <person name="Bult C."/>
            <person name="Grimmond S.M."/>
            <person name="Teasdale R.D."/>
            <person name="Liu E.T."/>
            <person name="Brusic V."/>
            <person name="Quackenbush J."/>
            <person name="Wahlestedt C."/>
            <person name="Mattick J.S."/>
            <person name="Hume D.A."/>
            <person name="Kai C."/>
            <person name="Sasaki D."/>
            <person name="Tomaru Y."/>
            <person name="Fukuda S."/>
            <person name="Kanamori-Katayama M."/>
            <person name="Suzuki M."/>
            <person name="Aoki J."/>
            <person name="Arakawa T."/>
            <person name="Iida J."/>
            <person name="Imamura K."/>
            <person name="Itoh M."/>
            <person name="Kato T."/>
            <person name="Kawaji H."/>
            <person name="Kawagashira N."/>
            <person name="Kawashima T."/>
            <person name="Kojima M."/>
            <person name="Kondo S."/>
            <person name="Konno H."/>
            <person name="Nakano K."/>
            <person name="Ninomiya N."/>
            <person name="Nishio T."/>
            <person name="Okada M."/>
            <person name="Plessy C."/>
            <person name="Shibata K."/>
            <person name="Shiraki T."/>
            <person name="Suzuki S."/>
            <person name="Tagami M."/>
            <person name="Waki K."/>
            <person name="Watahiki A."/>
            <person name="Okamura-Oho Y."/>
            <person name="Suzuki H."/>
            <person name="Kawai J."/>
            <person name="Hayashizaki Y."/>
        </authorList>
    </citation>
    <scope>NUCLEOTIDE SEQUENCE [LARGE SCALE MRNA] OF 236-301</scope>
    <source>
        <strain>C57BL/6J</strain>
        <tissue>Small intestine</tissue>
    </source>
</reference>
<reference key="5">
    <citation type="journal article" date="2015" name="Genetics">
        <title>Quantitative changes in Gimap3 and Gimap5 expression modify mitochondrial DNA segregation in mice.</title>
        <authorList>
            <person name="Jokinen R."/>
            <person name="Lahtinen T."/>
            <person name="Marttinen P."/>
            <person name="Myoehaenen M."/>
            <person name="Ruotsalainen P."/>
            <person name="Yeung N."/>
            <person name="Shvetsova A."/>
            <person name="Kastaniotis A.J."/>
            <person name="Hiltunen J.K."/>
            <person name="Oehman T."/>
            <person name="Nyman T.A."/>
            <person name="Weiler H."/>
            <person name="Battersby B.J."/>
        </authorList>
    </citation>
    <scope>FUNCTION</scope>
    <scope>SUBCELLULAR LOCATION</scope>
    <scope>TISSUE SPECIFICITY</scope>
</reference>
<protein>
    <recommendedName>
        <fullName>GTPase IMAP family member 3</fullName>
    </recommendedName>
    <alternativeName>
        <fullName>Immunity-associated nucleotide 4 protein</fullName>
        <shortName evidence="8">IAN-4</shortName>
    </alternativeName>
</protein>
<evidence type="ECO:0000250" key="1">
    <source>
        <dbReference type="UniProtKB" id="Q8WWP7"/>
    </source>
</evidence>
<evidence type="ECO:0000250" key="2">
    <source>
        <dbReference type="UniProtKB" id="Q9UG22"/>
    </source>
</evidence>
<evidence type="ECO:0000255" key="3"/>
<evidence type="ECO:0000255" key="4">
    <source>
        <dbReference type="PROSITE-ProRule" id="PRU01057"/>
    </source>
</evidence>
<evidence type="ECO:0000269" key="5">
    <source>
    </source>
</evidence>
<evidence type="ECO:0000269" key="6">
    <source>
    </source>
</evidence>
<evidence type="ECO:0000269" key="7">
    <source>
    </source>
</evidence>
<evidence type="ECO:0000303" key="8">
    <source>
    </source>
</evidence>
<evidence type="ECO:0000303" key="9">
    <source>
    </source>
</evidence>
<evidence type="ECO:0000305" key="10"/>
<evidence type="ECO:0000305" key="11">
    <source>
    </source>
</evidence>
<evidence type="ECO:0000305" key="12">
    <source>
    </source>
</evidence>
<gene>
    <name type="primary">Gimap3</name>
    <name evidence="8 9" type="synonym">Ian4</name>
</gene>
<comment type="function">
    <text evidence="5 6 7">During thymocyte development, may support the positive selection of CD4 and CD8 T cells (PubMed:16509771). May play a role in mitochondrial DNA segregation in hematopoietic tissues (PubMed:25808953). Binds GTP (PubMed:11238997).</text>
</comment>
<comment type="subunit">
    <text evidence="6">Interacts with BAD, BAK1, BAX, BCL2, BCL2L1/Bcl-xL and BCL2L11/BimEL (PubMed:16509771). The interaction with BAX is increased, when cells initiate apoptosis upon IL2 withdrawal (PubMed:16509771).</text>
</comment>
<comment type="interaction">
    <interactant intactId="EBI-15572304">
        <id>Q99MI6</id>
    </interactant>
    <interactant intactId="EBI-526314">
        <id>P10417</id>
        <label>Bcl2</label>
    </interactant>
    <organismsDiffer>false</organismsDiffer>
    <experiments>4</experiments>
</comment>
<comment type="interaction">
    <interactant intactId="EBI-15572304">
        <id>Q99MI6</id>
    </interactant>
    <interactant intactId="EBI-516580">
        <id>Q07812</id>
        <label>BAX</label>
    </interactant>
    <organismsDiffer>true</organismsDiffer>
    <experiments>2</experiments>
</comment>
<comment type="interaction">
    <interactant intactId="EBI-15572304">
        <id>Q99MI6</id>
    </interactant>
    <interactant intactId="EBI-287195">
        <id>Q07817-1</id>
        <label>BCL2L1</label>
    </interactant>
    <organismsDiffer>true</organismsDiffer>
    <experiments>3</experiments>
</comment>
<comment type="subcellular location">
    <subcellularLocation>
        <location evidence="7">Endoplasmic reticulum membrane</location>
        <topology evidence="5">Single-pass type IV membrane protein</topology>
    </subcellularLocation>
    <text evidence="11 12">The mitochondrial localization originally reported was observed with C-terminally tagged protein and was not confirmed in later publications.</text>
</comment>
<comment type="tissue specificity">
    <text evidence="6 7">Expressed in thymus (in thymocytes), spleen (in splenocytes), lymph node and, at lower levels, in lung (PubMed:16509771, PubMed:25808953). Highly expressed in T lymphocytes (PubMed:16509771).</text>
</comment>
<comment type="developmental stage">
    <text evidence="6">Up-regulated upon the maturation of CD4/CD8 double-positive to CD4 single-positive thymocytes.</text>
</comment>
<comment type="induction">
    <text>By BCR-ABL oncogene.</text>
</comment>
<comment type="similarity">
    <text evidence="10">Belongs to the TRAFAC class TrmE-Era-EngA-EngB-Septin-like GTPase superfamily. AIG1/Toc34/Toc159-like paraseptin GTPase family. IAN subfamily.</text>
</comment>
<comment type="sequence caution" evidence="10">
    <conflict type="frameshift">
        <sequence resource="EMBL-CDS" id="AAK31138"/>
    </conflict>
</comment>
<proteinExistence type="evidence at protein level"/>
<accession>Q99MI6</accession>
<accession>Q4VBX0</accession>
<accession>Q549W4</accession>
<accession>Q8CF04</accession>